<organism>
    <name type="scientific">Xylella fastidiosa (strain Temecula1 / ATCC 700964)</name>
    <dbReference type="NCBI Taxonomy" id="183190"/>
    <lineage>
        <taxon>Bacteria</taxon>
        <taxon>Pseudomonadati</taxon>
        <taxon>Pseudomonadota</taxon>
        <taxon>Gammaproteobacteria</taxon>
        <taxon>Lysobacterales</taxon>
        <taxon>Lysobacteraceae</taxon>
        <taxon>Xylella</taxon>
    </lineage>
</organism>
<accession>Q87EJ8</accession>
<reference key="1">
    <citation type="journal article" date="2003" name="J. Bacteriol.">
        <title>Comparative analyses of the complete genome sequences of Pierce's disease and citrus variegated chlorosis strains of Xylella fastidiosa.</title>
        <authorList>
            <person name="Van Sluys M.A."/>
            <person name="de Oliveira M.C."/>
            <person name="Monteiro-Vitorello C.B."/>
            <person name="Miyaki C.Y."/>
            <person name="Furlan L.R."/>
            <person name="Camargo L.E.A."/>
            <person name="da Silva A.C.R."/>
            <person name="Moon D.H."/>
            <person name="Takita M.A."/>
            <person name="Lemos E.G.M."/>
            <person name="Machado M.A."/>
            <person name="Ferro M.I.T."/>
            <person name="da Silva F.R."/>
            <person name="Goldman M.H.S."/>
            <person name="Goldman G.H."/>
            <person name="Lemos M.V.F."/>
            <person name="El-Dorry H."/>
            <person name="Tsai S.M."/>
            <person name="Carrer H."/>
            <person name="Carraro D.M."/>
            <person name="de Oliveira R.C."/>
            <person name="Nunes L.R."/>
            <person name="Siqueira W.J."/>
            <person name="Coutinho L.L."/>
            <person name="Kimura E.T."/>
            <person name="Ferro E.S."/>
            <person name="Harakava R."/>
            <person name="Kuramae E.E."/>
            <person name="Marino C.L."/>
            <person name="Giglioti E."/>
            <person name="Abreu I.L."/>
            <person name="Alves L.M.C."/>
            <person name="do Amaral A.M."/>
            <person name="Baia G.S."/>
            <person name="Blanco S.R."/>
            <person name="Brito M.S."/>
            <person name="Cannavan F.S."/>
            <person name="Celestino A.V."/>
            <person name="da Cunha A.F."/>
            <person name="Fenille R.C."/>
            <person name="Ferro J.A."/>
            <person name="Formighieri E.F."/>
            <person name="Kishi L.T."/>
            <person name="Leoni S.G."/>
            <person name="Oliveira A.R."/>
            <person name="Rosa V.E. Jr."/>
            <person name="Sassaki F.T."/>
            <person name="Sena J.A.D."/>
            <person name="de Souza A.A."/>
            <person name="Truffi D."/>
            <person name="Tsukumo F."/>
            <person name="Yanai G.M."/>
            <person name="Zaros L.G."/>
            <person name="Civerolo E.L."/>
            <person name="Simpson A.J.G."/>
            <person name="Almeida N.F. Jr."/>
            <person name="Setubal J.C."/>
            <person name="Kitajima J.P."/>
        </authorList>
    </citation>
    <scope>NUCLEOTIDE SEQUENCE [LARGE SCALE GENOMIC DNA]</scope>
    <source>
        <strain>Temecula1 / ATCC 700964</strain>
    </source>
</reference>
<protein>
    <recommendedName>
        <fullName evidence="1">Aspartate/glutamate leucyltransferase</fullName>
        <ecNumber evidence="1">2.3.2.29</ecNumber>
    </recommendedName>
</protein>
<keyword id="KW-0012">Acyltransferase</keyword>
<keyword id="KW-0963">Cytoplasm</keyword>
<keyword id="KW-1185">Reference proteome</keyword>
<keyword id="KW-0808">Transferase</keyword>
<proteinExistence type="inferred from homology"/>
<feature type="chain" id="PRO_0000195123" description="Aspartate/glutamate leucyltransferase">
    <location>
        <begin position="1"/>
        <end position="254"/>
    </location>
</feature>
<evidence type="ECO:0000255" key="1">
    <source>
        <dbReference type="HAMAP-Rule" id="MF_00689"/>
    </source>
</evidence>
<dbReference type="EC" id="2.3.2.29" evidence="1"/>
<dbReference type="EMBL" id="AE009442">
    <property type="protein sequence ID" value="AAO28193.1"/>
    <property type="molecule type" value="Genomic_DNA"/>
</dbReference>
<dbReference type="RefSeq" id="WP_004088071.1">
    <property type="nucleotide sequence ID" value="NC_004556.1"/>
</dbReference>
<dbReference type="SMR" id="Q87EJ8"/>
<dbReference type="KEGG" id="xft:PD_0309"/>
<dbReference type="HOGENOM" id="CLU_077607_0_0_6"/>
<dbReference type="Proteomes" id="UP000002516">
    <property type="component" value="Chromosome"/>
</dbReference>
<dbReference type="GO" id="GO:0005737">
    <property type="term" value="C:cytoplasm"/>
    <property type="evidence" value="ECO:0007669"/>
    <property type="project" value="UniProtKB-SubCell"/>
</dbReference>
<dbReference type="GO" id="GO:0004057">
    <property type="term" value="F:arginyl-tRNA--protein transferase activity"/>
    <property type="evidence" value="ECO:0007669"/>
    <property type="project" value="InterPro"/>
</dbReference>
<dbReference type="GO" id="GO:0008914">
    <property type="term" value="F:leucyl-tRNA--protein transferase activity"/>
    <property type="evidence" value="ECO:0007669"/>
    <property type="project" value="UniProtKB-UniRule"/>
</dbReference>
<dbReference type="GO" id="GO:0071596">
    <property type="term" value="P:ubiquitin-dependent protein catabolic process via the N-end rule pathway"/>
    <property type="evidence" value="ECO:0007669"/>
    <property type="project" value="InterPro"/>
</dbReference>
<dbReference type="HAMAP" id="MF_00689">
    <property type="entry name" value="Bpt"/>
    <property type="match status" value="1"/>
</dbReference>
<dbReference type="InterPro" id="IPR016181">
    <property type="entry name" value="Acyl_CoA_acyltransferase"/>
</dbReference>
<dbReference type="InterPro" id="IPR017138">
    <property type="entry name" value="Asp_Glu_LeuTrfase"/>
</dbReference>
<dbReference type="InterPro" id="IPR030700">
    <property type="entry name" value="N-end_Aminoacyl_Trfase"/>
</dbReference>
<dbReference type="InterPro" id="IPR007472">
    <property type="entry name" value="N-end_Aminoacyl_Trfase_C"/>
</dbReference>
<dbReference type="InterPro" id="IPR007471">
    <property type="entry name" value="N-end_Aminoacyl_Trfase_N"/>
</dbReference>
<dbReference type="NCBIfam" id="NF002341">
    <property type="entry name" value="PRK01305.1-1"/>
    <property type="match status" value="1"/>
</dbReference>
<dbReference type="NCBIfam" id="NF002342">
    <property type="entry name" value="PRK01305.1-3"/>
    <property type="match status" value="1"/>
</dbReference>
<dbReference type="NCBIfam" id="NF002346">
    <property type="entry name" value="PRK01305.2-3"/>
    <property type="match status" value="1"/>
</dbReference>
<dbReference type="PANTHER" id="PTHR21367">
    <property type="entry name" value="ARGININE-TRNA-PROTEIN TRANSFERASE 1"/>
    <property type="match status" value="1"/>
</dbReference>
<dbReference type="PANTHER" id="PTHR21367:SF1">
    <property type="entry name" value="ARGINYL-TRNA--PROTEIN TRANSFERASE 1"/>
    <property type="match status" value="1"/>
</dbReference>
<dbReference type="Pfam" id="PF04377">
    <property type="entry name" value="ATE_C"/>
    <property type="match status" value="1"/>
</dbReference>
<dbReference type="Pfam" id="PF04376">
    <property type="entry name" value="ATE_N"/>
    <property type="match status" value="1"/>
</dbReference>
<dbReference type="PIRSF" id="PIRSF037208">
    <property type="entry name" value="ATE_pro_prd"/>
    <property type="match status" value="1"/>
</dbReference>
<dbReference type="SUPFAM" id="SSF55729">
    <property type="entry name" value="Acyl-CoA N-acyltransferases (Nat)"/>
    <property type="match status" value="1"/>
</dbReference>
<name>BPT_XYLFT</name>
<gene>
    <name evidence="1" type="primary">bpt</name>
    <name type="synonym">ate1</name>
    <name type="ordered locus">PD_0309</name>
</gene>
<sequence length="254" mass="29530">MAIDSKPHDDLQLFKTNLHPCGYWPDRWASDLVMDPNDPRLGAIYPQTLAWGFRRSGNLLYRPHCEHCNACVPVRVNVNAFVPNRSQRRCLARNATLVTRIVPAERNAEQLSLYRRYLHQRHPDGGMDGHGAIEFDQFLIGPWGYGRFMEIREPATNGTPGQLLAVAVTDLTHQALSAVYTFYEPNAAARGLGTLAILHQIHWAQREQRPYLYLGYWIKDHFKMDYKRRFQKLEIYDGYRWRPFSTTYPTTHTL</sequence>
<comment type="function">
    <text evidence="1">Functions in the N-end rule pathway of protein degradation where it conjugates Leu from its aminoacyl-tRNA to the N-termini of proteins containing an N-terminal aspartate or glutamate.</text>
</comment>
<comment type="catalytic activity">
    <reaction evidence="1">
        <text>N-terminal L-glutamyl-[protein] + L-leucyl-tRNA(Leu) = N-terminal L-leucyl-L-glutamyl-[protein] + tRNA(Leu) + H(+)</text>
        <dbReference type="Rhea" id="RHEA:50412"/>
        <dbReference type="Rhea" id="RHEA-COMP:9613"/>
        <dbReference type="Rhea" id="RHEA-COMP:9622"/>
        <dbReference type="Rhea" id="RHEA-COMP:12664"/>
        <dbReference type="Rhea" id="RHEA-COMP:12668"/>
        <dbReference type="ChEBI" id="CHEBI:15378"/>
        <dbReference type="ChEBI" id="CHEBI:64721"/>
        <dbReference type="ChEBI" id="CHEBI:78442"/>
        <dbReference type="ChEBI" id="CHEBI:78494"/>
        <dbReference type="ChEBI" id="CHEBI:133041"/>
        <dbReference type="EC" id="2.3.2.29"/>
    </reaction>
</comment>
<comment type="catalytic activity">
    <reaction evidence="1">
        <text>N-terminal L-aspartyl-[protein] + L-leucyl-tRNA(Leu) = N-terminal L-leucyl-L-aspartyl-[protein] + tRNA(Leu) + H(+)</text>
        <dbReference type="Rhea" id="RHEA:50420"/>
        <dbReference type="Rhea" id="RHEA-COMP:9613"/>
        <dbReference type="Rhea" id="RHEA-COMP:9622"/>
        <dbReference type="Rhea" id="RHEA-COMP:12669"/>
        <dbReference type="Rhea" id="RHEA-COMP:12674"/>
        <dbReference type="ChEBI" id="CHEBI:15378"/>
        <dbReference type="ChEBI" id="CHEBI:64720"/>
        <dbReference type="ChEBI" id="CHEBI:78442"/>
        <dbReference type="ChEBI" id="CHEBI:78494"/>
        <dbReference type="ChEBI" id="CHEBI:133042"/>
        <dbReference type="EC" id="2.3.2.29"/>
    </reaction>
</comment>
<comment type="subcellular location">
    <subcellularLocation>
        <location evidence="1">Cytoplasm</location>
    </subcellularLocation>
</comment>
<comment type="similarity">
    <text evidence="1">Belongs to the R-transferase family. Bpt subfamily.</text>
</comment>